<reference key="1">
    <citation type="journal article" date="2002" name="Nucleic Acids Res.">
        <title>Genome sequence of Shigella flexneri 2a: insights into pathogenicity through comparison with genomes of Escherichia coli K12 and O157.</title>
        <authorList>
            <person name="Jin Q."/>
            <person name="Yuan Z."/>
            <person name="Xu J."/>
            <person name="Wang Y."/>
            <person name="Shen Y."/>
            <person name="Lu W."/>
            <person name="Wang J."/>
            <person name="Liu H."/>
            <person name="Yang J."/>
            <person name="Yang F."/>
            <person name="Zhang X."/>
            <person name="Zhang J."/>
            <person name="Yang G."/>
            <person name="Wu H."/>
            <person name="Qu D."/>
            <person name="Dong J."/>
            <person name="Sun L."/>
            <person name="Xue Y."/>
            <person name="Zhao A."/>
            <person name="Gao Y."/>
            <person name="Zhu J."/>
            <person name="Kan B."/>
            <person name="Ding K."/>
            <person name="Chen S."/>
            <person name="Cheng H."/>
            <person name="Yao Z."/>
            <person name="He B."/>
            <person name="Chen R."/>
            <person name="Ma D."/>
            <person name="Qiang B."/>
            <person name="Wen Y."/>
            <person name="Hou Y."/>
            <person name="Yu J."/>
        </authorList>
    </citation>
    <scope>NUCLEOTIDE SEQUENCE [LARGE SCALE GENOMIC DNA]</scope>
    <source>
        <strain>301 / Serotype 2a</strain>
    </source>
</reference>
<reference key="2">
    <citation type="journal article" date="2003" name="Infect. Immun.">
        <title>Complete genome sequence and comparative genomics of Shigella flexneri serotype 2a strain 2457T.</title>
        <authorList>
            <person name="Wei J."/>
            <person name="Goldberg M.B."/>
            <person name="Burland V."/>
            <person name="Venkatesan M.M."/>
            <person name="Deng W."/>
            <person name="Fournier G."/>
            <person name="Mayhew G.F."/>
            <person name="Plunkett G. III"/>
            <person name="Rose D.J."/>
            <person name="Darling A."/>
            <person name="Mau B."/>
            <person name="Perna N.T."/>
            <person name="Payne S.M."/>
            <person name="Runyen-Janecky L.J."/>
            <person name="Zhou S."/>
            <person name="Schwartz D.C."/>
            <person name="Blattner F.R."/>
        </authorList>
    </citation>
    <scope>NUCLEOTIDE SEQUENCE [LARGE SCALE GENOMIC DNA]</scope>
    <source>
        <strain>ATCC 700930 / 2457T / Serotype 2a</strain>
    </source>
</reference>
<accession>P0AAQ5</accession>
<accession>P19678</accession>
<accession>P77666</accession>
<name>YAJD_SHIFL</name>
<dbReference type="EC" id="3.1.-.-"/>
<dbReference type="EMBL" id="AE005674">
    <property type="protein sequence ID" value="AAN42005.1"/>
    <property type="molecule type" value="Genomic_DNA"/>
</dbReference>
<dbReference type="EMBL" id="AE014073">
    <property type="protein sequence ID" value="AAP15882.1"/>
    <property type="molecule type" value="Genomic_DNA"/>
</dbReference>
<dbReference type="RefSeq" id="NP_706298.1">
    <property type="nucleotide sequence ID" value="NC_004337.2"/>
</dbReference>
<dbReference type="RefSeq" id="WP_000974813.1">
    <property type="nucleotide sequence ID" value="NZ_WPGW01000023.1"/>
</dbReference>
<dbReference type="STRING" id="198214.SF0347"/>
<dbReference type="PaxDb" id="198214-SF0347"/>
<dbReference type="GeneID" id="1027670"/>
<dbReference type="GeneID" id="93777050"/>
<dbReference type="KEGG" id="sfl:SF0347"/>
<dbReference type="KEGG" id="sfx:S0355"/>
<dbReference type="PATRIC" id="fig|198214.7.peg.398"/>
<dbReference type="HOGENOM" id="CLU_136125_1_0_6"/>
<dbReference type="Proteomes" id="UP000001006">
    <property type="component" value="Chromosome"/>
</dbReference>
<dbReference type="Proteomes" id="UP000002673">
    <property type="component" value="Chromosome"/>
</dbReference>
<dbReference type="GO" id="GO:0005829">
    <property type="term" value="C:cytosol"/>
    <property type="evidence" value="ECO:0007669"/>
    <property type="project" value="TreeGrafter"/>
</dbReference>
<dbReference type="GO" id="GO:0004519">
    <property type="term" value="F:endonuclease activity"/>
    <property type="evidence" value="ECO:0007669"/>
    <property type="project" value="InterPro"/>
</dbReference>
<dbReference type="GO" id="GO:0003676">
    <property type="term" value="F:nucleic acid binding"/>
    <property type="evidence" value="ECO:0007669"/>
    <property type="project" value="InterPro"/>
</dbReference>
<dbReference type="GO" id="GO:0008270">
    <property type="term" value="F:zinc ion binding"/>
    <property type="evidence" value="ECO:0007669"/>
    <property type="project" value="InterPro"/>
</dbReference>
<dbReference type="CDD" id="cd00085">
    <property type="entry name" value="HNHc"/>
    <property type="match status" value="1"/>
</dbReference>
<dbReference type="Gene3D" id="1.10.30.50">
    <property type="match status" value="1"/>
</dbReference>
<dbReference type="InterPro" id="IPR002711">
    <property type="entry name" value="HNH"/>
</dbReference>
<dbReference type="InterPro" id="IPR003615">
    <property type="entry name" value="HNH_nuc"/>
</dbReference>
<dbReference type="NCBIfam" id="NF008448">
    <property type="entry name" value="PRK11295.1"/>
    <property type="match status" value="1"/>
</dbReference>
<dbReference type="PANTHER" id="PTHR41286">
    <property type="entry name" value="HNH NUCLEASE YAJD-RELATED"/>
    <property type="match status" value="1"/>
</dbReference>
<dbReference type="PANTHER" id="PTHR41286:SF1">
    <property type="entry name" value="HNH NUCLEASE YAJD-RELATED"/>
    <property type="match status" value="1"/>
</dbReference>
<dbReference type="Pfam" id="PF01844">
    <property type="entry name" value="HNH"/>
    <property type="match status" value="1"/>
</dbReference>
<dbReference type="SMART" id="SM00507">
    <property type="entry name" value="HNHc"/>
    <property type="match status" value="1"/>
</dbReference>
<protein>
    <recommendedName>
        <fullName>Putative HNH nuclease YajD</fullName>
        <ecNumber>3.1.-.-</ecNumber>
    </recommendedName>
</protein>
<sequence length="115" mass="13364">MAIIPKNYARLESGYREKALKIYPWVCGRCSREFVYSNLRELTVHHIDHDHTNNPEDGSNWELLCLYCHDHEHSKYTEADQYGTTVIAGEDAQKDVGEAKYNPFADLKAMMNKKK</sequence>
<proteinExistence type="inferred from homology"/>
<comment type="similarity">
    <text evidence="1">Belongs to the HNH nuclease family.</text>
</comment>
<gene>
    <name type="primary">yajD</name>
    <name type="ordered locus">SF0347</name>
    <name type="ordered locus">S0355</name>
</gene>
<feature type="chain" id="PRO_0000168609" description="Putative HNH nuclease YajD">
    <location>
        <begin position="1"/>
        <end position="115"/>
    </location>
</feature>
<feature type="domain" description="HNH">
    <location>
        <begin position="27"/>
        <end position="75"/>
    </location>
</feature>
<keyword id="KW-0378">Hydrolase</keyword>
<keyword id="KW-0540">Nuclease</keyword>
<keyword id="KW-1185">Reference proteome</keyword>
<evidence type="ECO:0000305" key="1"/>
<organism>
    <name type="scientific">Shigella flexneri</name>
    <dbReference type="NCBI Taxonomy" id="623"/>
    <lineage>
        <taxon>Bacteria</taxon>
        <taxon>Pseudomonadati</taxon>
        <taxon>Pseudomonadota</taxon>
        <taxon>Gammaproteobacteria</taxon>
        <taxon>Enterobacterales</taxon>
        <taxon>Enterobacteriaceae</taxon>
        <taxon>Shigella</taxon>
    </lineage>
</organism>